<protein>
    <recommendedName>
        <fullName evidence="1">tRNA-cytidine(32) 2-sulfurtransferase</fullName>
        <ecNumber evidence="1">2.8.1.-</ecNumber>
    </recommendedName>
    <alternativeName>
        <fullName evidence="1">Two-thiocytidine biosynthesis protein A</fullName>
    </alternativeName>
    <alternativeName>
        <fullName evidence="1">tRNA 2-thiocytidine biosynthesis protein TtcA</fullName>
    </alternativeName>
</protein>
<sequence>MQEIQKNTKKEQYNLNKLQKRLRRNVGEAIADFNMIEEGDRIMVCLSGGKDSYTMLEILRNLQQSAPINFSLVAVNLDQKQPGFPEHILPAYLEQLGVEYKIVEENTYGIVKEKIPEGKTTCSLCSRLRRGILYRTATELGATKIALGHHRDDILQTLFLNMFYGGKMKGMPPKLMSDDGKHIVIRPLAYCREKDIIRFAEAKAFPIIPCNLCGSQPNLQRQVIADMLRDWDKRYPGRIETMFSAMQNVVPSHLCDTNLFDFKGITHGSEVVDGGDLAFDREEIPLQPAGWQPEEDDTALEALRLDVIEVK</sequence>
<accession>Q8ZP88</accession>
<comment type="function">
    <text evidence="1 4">Catalyzes the ATP-dependent 2-thiolation of cytidine in position 32 of tRNA, to form 2-thiocytidine (s(2)C32). The sulfur atoms are provided by the cysteine/cysteine desulfurase (IscS) system.</text>
</comment>
<comment type="catalytic activity">
    <reaction evidence="1 4">
        <text>cytidine(32) in tRNA + S-sulfanyl-L-cysteinyl-[cysteine desulfurase] + AH2 + ATP = 2-thiocytidine(32) in tRNA + L-cysteinyl-[cysteine desulfurase] + A + AMP + diphosphate + H(+)</text>
        <dbReference type="Rhea" id="RHEA:57048"/>
        <dbReference type="Rhea" id="RHEA-COMP:10288"/>
        <dbReference type="Rhea" id="RHEA-COMP:12157"/>
        <dbReference type="Rhea" id="RHEA-COMP:12158"/>
        <dbReference type="Rhea" id="RHEA-COMP:14821"/>
        <dbReference type="ChEBI" id="CHEBI:13193"/>
        <dbReference type="ChEBI" id="CHEBI:15378"/>
        <dbReference type="ChEBI" id="CHEBI:17499"/>
        <dbReference type="ChEBI" id="CHEBI:29950"/>
        <dbReference type="ChEBI" id="CHEBI:30616"/>
        <dbReference type="ChEBI" id="CHEBI:33019"/>
        <dbReference type="ChEBI" id="CHEBI:61963"/>
        <dbReference type="ChEBI" id="CHEBI:82748"/>
        <dbReference type="ChEBI" id="CHEBI:141453"/>
        <dbReference type="ChEBI" id="CHEBI:456215"/>
    </reaction>
    <physiologicalReaction direction="left-to-right" evidence="1 4">
        <dbReference type="Rhea" id="RHEA:57049"/>
    </physiologicalReaction>
</comment>
<comment type="cofactor">
    <cofactor evidence="1">
        <name>Mg(2+)</name>
        <dbReference type="ChEBI" id="CHEBI:18420"/>
    </cofactor>
</comment>
<comment type="cofactor">
    <cofactor evidence="1">
        <name>[4Fe-4S] cluster</name>
        <dbReference type="ChEBI" id="CHEBI:49883"/>
    </cofactor>
    <text evidence="1">Binds 1 [4Fe-4S] cluster per subunit. The cluster is chelated by three Cys residues, the fourth Fe has a free coordination site that may bind a sulfur atom transferred from the persulfide of IscS.</text>
</comment>
<comment type="pathway">
    <text evidence="1 2">tRNA modification.</text>
</comment>
<comment type="subunit">
    <text evidence="1">Homodimer.</text>
</comment>
<comment type="subcellular location">
    <subcellularLocation>
        <location evidence="1">Cytoplasm</location>
    </subcellularLocation>
</comment>
<comment type="disruption phenotype">
    <text evidence="2">Loss of cytidine thiolation in position 32 in tRNA. The deletion mutant grows at the same rate as the congenic wild-type strain, but several specific steps in the translational decoding process are affected in the mutant.</text>
</comment>
<comment type="miscellaneous">
    <text evidence="1">The thiolation reaction likely consists of two steps: a first activation step by ATP to form an adenylated intermediate of the target base of tRNA, and a second nucleophilic substitution step of the sulfur (S) atom supplied by the hydrosulfide attached to the Fe-S cluster.</text>
</comment>
<comment type="similarity">
    <text evidence="1">Belongs to the TtcA family.</text>
</comment>
<name>TTCA_SALTY</name>
<proteinExistence type="evidence at protein level"/>
<feature type="chain" id="PRO_0000348829" description="tRNA-cytidine(32) 2-sulfurtransferase">
    <location>
        <begin position="1"/>
        <end position="311"/>
    </location>
</feature>
<feature type="short sequence motif" description="PP-loop motif" evidence="1">
    <location>
        <begin position="47"/>
        <end position="52"/>
    </location>
</feature>
<feature type="binding site" evidence="1">
    <location>
        <position position="122"/>
    </location>
    <ligand>
        <name>[4Fe-4S] cluster</name>
        <dbReference type="ChEBI" id="CHEBI:49883"/>
    </ligand>
</feature>
<feature type="binding site" evidence="1">
    <location>
        <position position="125"/>
    </location>
    <ligand>
        <name>[4Fe-4S] cluster</name>
        <dbReference type="ChEBI" id="CHEBI:49883"/>
    </ligand>
</feature>
<feature type="binding site" evidence="1">
    <location>
        <position position="213"/>
    </location>
    <ligand>
        <name>[4Fe-4S] cluster</name>
        <dbReference type="ChEBI" id="CHEBI:49883"/>
    </ligand>
</feature>
<feature type="mutagenesis site" description="Abolishes formation of s(2)C32; when associated with A-125." evidence="2">
    <original>C</original>
    <variation>A</variation>
    <location>
        <position position="122"/>
    </location>
</feature>
<feature type="mutagenesis site" description="Abolishes formation of s(2)C32." evidence="2">
    <original>C</original>
    <variation>S</variation>
    <location>
        <position position="122"/>
    </location>
</feature>
<feature type="mutagenesis site" description="Abolishes formation of s(2)C32; when associated with A-122." evidence="2">
    <original>C</original>
    <variation>A</variation>
    <location>
        <position position="125"/>
    </location>
</feature>
<feature type="mutagenesis site" description="Abolishes formation of s(2)C32." evidence="2">
    <original>C</original>
    <variation>S</variation>
    <location>
        <position position="125"/>
    </location>
</feature>
<dbReference type="EC" id="2.8.1.-" evidence="1"/>
<dbReference type="EMBL" id="AE006468">
    <property type="protein sequence ID" value="AAL20572.1"/>
    <property type="molecule type" value="Genomic_DNA"/>
</dbReference>
<dbReference type="RefSeq" id="WP_001156208.1">
    <property type="nucleotide sequence ID" value="NC_003197.2"/>
</dbReference>
<dbReference type="SMR" id="Q8ZP88"/>
<dbReference type="STRING" id="99287.STM1654"/>
<dbReference type="PaxDb" id="99287-STM1654"/>
<dbReference type="KEGG" id="stm:STM1654"/>
<dbReference type="PATRIC" id="fig|99287.12.peg.1748"/>
<dbReference type="HOGENOM" id="CLU_026481_0_0_6"/>
<dbReference type="PhylomeDB" id="Q8ZP88"/>
<dbReference type="BioCyc" id="SENT99287:STM1654-MONOMER"/>
<dbReference type="Proteomes" id="UP000001014">
    <property type="component" value="Chromosome"/>
</dbReference>
<dbReference type="GO" id="GO:0005829">
    <property type="term" value="C:cytosol"/>
    <property type="evidence" value="ECO:0000318"/>
    <property type="project" value="GO_Central"/>
</dbReference>
<dbReference type="GO" id="GO:0051539">
    <property type="term" value="F:4 iron, 4 sulfur cluster binding"/>
    <property type="evidence" value="ECO:0007669"/>
    <property type="project" value="UniProtKB-UniRule"/>
</dbReference>
<dbReference type="GO" id="GO:0005524">
    <property type="term" value="F:ATP binding"/>
    <property type="evidence" value="ECO:0007669"/>
    <property type="project" value="UniProtKB-UniRule"/>
</dbReference>
<dbReference type="GO" id="GO:0000287">
    <property type="term" value="F:magnesium ion binding"/>
    <property type="evidence" value="ECO:0007669"/>
    <property type="project" value="UniProtKB-UniRule"/>
</dbReference>
<dbReference type="GO" id="GO:0016783">
    <property type="term" value="F:sulfurtransferase activity"/>
    <property type="evidence" value="ECO:0000318"/>
    <property type="project" value="GO_Central"/>
</dbReference>
<dbReference type="GO" id="GO:0000049">
    <property type="term" value="F:tRNA binding"/>
    <property type="evidence" value="ECO:0007669"/>
    <property type="project" value="UniProtKB-KW"/>
</dbReference>
<dbReference type="GO" id="GO:0034227">
    <property type="term" value="P:tRNA thio-modification"/>
    <property type="evidence" value="ECO:0000318"/>
    <property type="project" value="GO_Central"/>
</dbReference>
<dbReference type="CDD" id="cd24138">
    <property type="entry name" value="TtcA-like"/>
    <property type="match status" value="1"/>
</dbReference>
<dbReference type="FunFam" id="3.40.50.620:FF:000046">
    <property type="entry name" value="tRNA-cytidine(32) 2-sulfurtransferase"/>
    <property type="match status" value="1"/>
</dbReference>
<dbReference type="Gene3D" id="3.40.50.620">
    <property type="entry name" value="HUPs"/>
    <property type="match status" value="1"/>
</dbReference>
<dbReference type="HAMAP" id="MF_01850">
    <property type="entry name" value="TtcA"/>
    <property type="match status" value="1"/>
</dbReference>
<dbReference type="InterPro" id="IPR014729">
    <property type="entry name" value="Rossmann-like_a/b/a_fold"/>
</dbReference>
<dbReference type="InterPro" id="IPR011063">
    <property type="entry name" value="TilS/TtcA_N"/>
</dbReference>
<dbReference type="InterPro" id="IPR012089">
    <property type="entry name" value="tRNA_Cyd_32_2_STrfase"/>
</dbReference>
<dbReference type="InterPro" id="IPR035107">
    <property type="entry name" value="tRNA_thiolation_TtcA_Ctu1"/>
</dbReference>
<dbReference type="NCBIfam" id="NF007972">
    <property type="entry name" value="PRK10696.1"/>
    <property type="match status" value="1"/>
</dbReference>
<dbReference type="PANTHER" id="PTHR43686:SF1">
    <property type="entry name" value="AMINOTRAN_5 DOMAIN-CONTAINING PROTEIN"/>
    <property type="match status" value="1"/>
</dbReference>
<dbReference type="PANTHER" id="PTHR43686">
    <property type="entry name" value="SULFURTRANSFERASE-RELATED"/>
    <property type="match status" value="1"/>
</dbReference>
<dbReference type="Pfam" id="PF01171">
    <property type="entry name" value="ATP_bind_3"/>
    <property type="match status" value="1"/>
</dbReference>
<dbReference type="PIRSF" id="PIRSF004976">
    <property type="entry name" value="ATPase_YdaO"/>
    <property type="match status" value="1"/>
</dbReference>
<dbReference type="SUPFAM" id="SSF52402">
    <property type="entry name" value="Adenine nucleotide alpha hydrolases-like"/>
    <property type="match status" value="1"/>
</dbReference>
<evidence type="ECO:0000255" key="1">
    <source>
        <dbReference type="HAMAP-Rule" id="MF_01850"/>
    </source>
</evidence>
<evidence type="ECO:0000269" key="2">
    <source>
    </source>
</evidence>
<evidence type="ECO:0000303" key="3">
    <source>
    </source>
</evidence>
<evidence type="ECO:0000305" key="4">
    <source>
    </source>
</evidence>
<gene>
    <name evidence="1 3" type="primary">ttcA</name>
    <name type="ordered locus">STM1654</name>
</gene>
<keyword id="KW-0004">4Fe-4S</keyword>
<keyword id="KW-0067">ATP-binding</keyword>
<keyword id="KW-0963">Cytoplasm</keyword>
<keyword id="KW-0408">Iron</keyword>
<keyword id="KW-0411">Iron-sulfur</keyword>
<keyword id="KW-0460">Magnesium</keyword>
<keyword id="KW-0479">Metal-binding</keyword>
<keyword id="KW-0547">Nucleotide-binding</keyword>
<keyword id="KW-1185">Reference proteome</keyword>
<keyword id="KW-0694">RNA-binding</keyword>
<keyword id="KW-0808">Transferase</keyword>
<keyword id="KW-0819">tRNA processing</keyword>
<keyword id="KW-0820">tRNA-binding</keyword>
<reference key="1">
    <citation type="journal article" date="2001" name="Nature">
        <title>Complete genome sequence of Salmonella enterica serovar Typhimurium LT2.</title>
        <authorList>
            <person name="McClelland M."/>
            <person name="Sanderson K.E."/>
            <person name="Spieth J."/>
            <person name="Clifton S.W."/>
            <person name="Latreille P."/>
            <person name="Courtney L."/>
            <person name="Porwollik S."/>
            <person name="Ali J."/>
            <person name="Dante M."/>
            <person name="Du F."/>
            <person name="Hou S."/>
            <person name="Layman D."/>
            <person name="Leonard S."/>
            <person name="Nguyen C."/>
            <person name="Scott K."/>
            <person name="Holmes A."/>
            <person name="Grewal N."/>
            <person name="Mulvaney E."/>
            <person name="Ryan E."/>
            <person name="Sun H."/>
            <person name="Florea L."/>
            <person name="Miller W."/>
            <person name="Stoneking T."/>
            <person name="Nhan M."/>
            <person name="Waterston R."/>
            <person name="Wilson R.K."/>
        </authorList>
    </citation>
    <scope>NUCLEOTIDE SEQUENCE [LARGE SCALE GENOMIC DNA]</scope>
    <source>
        <strain>LT2 / SGSC1412 / ATCC 700720</strain>
    </source>
</reference>
<reference key="2">
    <citation type="journal article" date="2004" name="J. Bacteriol.">
        <title>The conserved Cys-X1-X2-Cys motif present in the TtcA protein is required for the thiolation of cytidine in position 32 of tRNA from Salmonella enterica serovar Typhimurium.</title>
        <authorList>
            <person name="Jaeger G."/>
            <person name="Leipuviene R."/>
            <person name="Pollard M.G."/>
            <person name="Qian Q."/>
            <person name="Bjoerk G.R."/>
        </authorList>
    </citation>
    <scope>FUNCTION</scope>
    <scope>MUTAGENESIS OF CYS-122 AND CYS-125</scope>
    <scope>DISRUPTION PHENOTYPE</scope>
    <scope>PATHWAY</scope>
    <source>
        <strain>LT2</strain>
    </source>
</reference>
<organism>
    <name type="scientific">Salmonella typhimurium (strain LT2 / SGSC1412 / ATCC 700720)</name>
    <dbReference type="NCBI Taxonomy" id="99287"/>
    <lineage>
        <taxon>Bacteria</taxon>
        <taxon>Pseudomonadati</taxon>
        <taxon>Pseudomonadota</taxon>
        <taxon>Gammaproteobacteria</taxon>
        <taxon>Enterobacterales</taxon>
        <taxon>Enterobacteriaceae</taxon>
        <taxon>Salmonella</taxon>
    </lineage>
</organism>